<evidence type="ECO:0000255" key="1"/>
<evidence type="ECO:0000269" key="2">
    <source>
    </source>
</evidence>
<evidence type="ECO:0000303" key="3">
    <source>
    </source>
</evidence>
<evidence type="ECO:0000305" key="4"/>
<evidence type="ECO:0000312" key="5">
    <source>
        <dbReference type="EMBL" id="ABJ13769.1"/>
    </source>
</evidence>
<gene>
    <name evidence="3" type="primary">dppA4</name>
    <name evidence="5" type="ordered locus">PA14_58420</name>
</gene>
<accession>A0A0H2ZGV7</accession>
<name>DPPA4_PSEAB</name>
<keyword id="KW-0571">Peptide transport</keyword>
<keyword id="KW-0653">Protein transport</keyword>
<keyword id="KW-0732">Signal</keyword>
<keyword id="KW-0813">Transport</keyword>
<comment type="function">
    <text evidence="2">Part of the ABC transporter DppABCDF involved in the uptake of various di/tripeptides (PubMed:25338022). Prefers dipeptides with acidic residues at the C-terminal end. Efficiently uses tripeptides (PubMed:25338022).</text>
</comment>
<comment type="subunit">
    <text evidence="2">The complex is composed of two ATP-binding proteins (DppD and DppF), two transmembrane proteins (DppB and DppC) and a solute-binding protein (DppA4) (PubMed:25338022). Five orthologous SBPs (DppA1-A5) are present in P.aeruginosa, which increases the substrate specificity of the DppBCDF transporter (PubMed:25338022).</text>
</comment>
<comment type="similarity">
    <text evidence="4">Belongs to the bacterial solute-binding protein 5 family.</text>
</comment>
<dbReference type="EMBL" id="CP000438">
    <property type="protein sequence ID" value="ABJ13769.1"/>
    <property type="molecule type" value="Genomic_DNA"/>
</dbReference>
<dbReference type="RefSeq" id="WP_003141337.1">
    <property type="nucleotide sequence ID" value="NZ_CP034244.1"/>
</dbReference>
<dbReference type="SMR" id="A0A0H2ZGV7"/>
<dbReference type="KEGG" id="pau:PA14_58420"/>
<dbReference type="HOGENOM" id="CLU_017028_7_0_6"/>
<dbReference type="BioCyc" id="PAER208963:G1G74-4921-MONOMER"/>
<dbReference type="Proteomes" id="UP000000653">
    <property type="component" value="Chromosome"/>
</dbReference>
<dbReference type="GO" id="GO:0043190">
    <property type="term" value="C:ATP-binding cassette (ABC) transporter complex"/>
    <property type="evidence" value="ECO:0007669"/>
    <property type="project" value="InterPro"/>
</dbReference>
<dbReference type="GO" id="GO:0030288">
    <property type="term" value="C:outer membrane-bounded periplasmic space"/>
    <property type="evidence" value="ECO:0007669"/>
    <property type="project" value="TreeGrafter"/>
</dbReference>
<dbReference type="GO" id="GO:1904680">
    <property type="term" value="F:peptide transmembrane transporter activity"/>
    <property type="evidence" value="ECO:0007669"/>
    <property type="project" value="TreeGrafter"/>
</dbReference>
<dbReference type="GO" id="GO:0042938">
    <property type="term" value="P:dipeptide transport"/>
    <property type="evidence" value="ECO:0007669"/>
    <property type="project" value="TreeGrafter"/>
</dbReference>
<dbReference type="GO" id="GO:0015031">
    <property type="term" value="P:protein transport"/>
    <property type="evidence" value="ECO:0007669"/>
    <property type="project" value="UniProtKB-KW"/>
</dbReference>
<dbReference type="CDD" id="cd08493">
    <property type="entry name" value="PBP2_DppA_like"/>
    <property type="match status" value="1"/>
</dbReference>
<dbReference type="FunFam" id="3.10.105.10:FF:000002">
    <property type="entry name" value="Dipeptide ABC transporter, substrate-binding protein"/>
    <property type="match status" value="1"/>
</dbReference>
<dbReference type="FunFam" id="3.40.190.10:FF:000036">
    <property type="entry name" value="Dipeptide ABC transporter, substrate-binding protein"/>
    <property type="match status" value="1"/>
</dbReference>
<dbReference type="FunFam" id="3.90.76.10:FF:000002">
    <property type="entry name" value="Dipeptide ABC transporter, substrate-binding protein"/>
    <property type="match status" value="1"/>
</dbReference>
<dbReference type="Gene3D" id="3.90.76.10">
    <property type="entry name" value="Dipeptide-binding Protein, Domain 1"/>
    <property type="match status" value="1"/>
</dbReference>
<dbReference type="Gene3D" id="3.10.105.10">
    <property type="entry name" value="Dipeptide-binding Protein, Domain 3"/>
    <property type="match status" value="1"/>
</dbReference>
<dbReference type="Gene3D" id="3.40.190.10">
    <property type="entry name" value="Periplasmic binding protein-like II"/>
    <property type="match status" value="1"/>
</dbReference>
<dbReference type="InterPro" id="IPR030678">
    <property type="entry name" value="Peptide/Ni-bd"/>
</dbReference>
<dbReference type="InterPro" id="IPR039424">
    <property type="entry name" value="SBP_5"/>
</dbReference>
<dbReference type="InterPro" id="IPR000914">
    <property type="entry name" value="SBP_5_dom"/>
</dbReference>
<dbReference type="PANTHER" id="PTHR30290:SF38">
    <property type="entry name" value="D,D-DIPEPTIDE-BINDING PERIPLASMIC PROTEIN DDPA-RELATED"/>
    <property type="match status" value="1"/>
</dbReference>
<dbReference type="PANTHER" id="PTHR30290">
    <property type="entry name" value="PERIPLASMIC BINDING COMPONENT OF ABC TRANSPORTER"/>
    <property type="match status" value="1"/>
</dbReference>
<dbReference type="Pfam" id="PF00496">
    <property type="entry name" value="SBP_bac_5"/>
    <property type="match status" value="1"/>
</dbReference>
<dbReference type="PIRSF" id="PIRSF002741">
    <property type="entry name" value="MppA"/>
    <property type="match status" value="1"/>
</dbReference>
<dbReference type="SUPFAM" id="SSF53850">
    <property type="entry name" value="Periplasmic binding protein-like II"/>
    <property type="match status" value="1"/>
</dbReference>
<feature type="signal peptide" evidence="1">
    <location>
        <begin position="1"/>
        <end position="25"/>
    </location>
</feature>
<feature type="chain" id="PRO_0000452191" description="Di/tripeptide-binding protein 4">
    <location>
        <begin position="26"/>
        <end position="533"/>
    </location>
</feature>
<organism>
    <name type="scientific">Pseudomonas aeruginosa (strain UCBPP-PA14)</name>
    <dbReference type="NCBI Taxonomy" id="208963"/>
    <lineage>
        <taxon>Bacteria</taxon>
        <taxon>Pseudomonadati</taxon>
        <taxon>Pseudomonadota</taxon>
        <taxon>Gammaproteobacteria</taxon>
        <taxon>Pseudomonadales</taxon>
        <taxon>Pseudomonadaceae</taxon>
        <taxon>Pseudomonas</taxon>
    </lineage>
</organism>
<proteinExistence type="evidence at protein level"/>
<reference key="1">
    <citation type="journal article" date="2006" name="Genome Biol.">
        <title>Genomic analysis reveals that Pseudomonas aeruginosa virulence is combinatorial.</title>
        <authorList>
            <person name="Lee D.G."/>
            <person name="Urbach J.M."/>
            <person name="Wu G."/>
            <person name="Liberati N.T."/>
            <person name="Feinbaum R.L."/>
            <person name="Miyata S."/>
            <person name="Diggins L.T."/>
            <person name="He J."/>
            <person name="Saucier M."/>
            <person name="Deziel E."/>
            <person name="Friedman L."/>
            <person name="Li L."/>
            <person name="Grills G."/>
            <person name="Montgomery K."/>
            <person name="Kucherlapati R."/>
            <person name="Rahme L.G."/>
            <person name="Ausubel F.M."/>
        </authorList>
    </citation>
    <scope>NUCLEOTIDE SEQUENCE [LARGE SCALE GENOMIC DNA]</scope>
    <source>
        <strain>UCBPP-PA14</strain>
    </source>
</reference>
<reference key="2">
    <citation type="journal article" date="2014" name="PLoS ONE">
        <title>High-throughput screening of dipeptide utilization mediated by the ABC transporter DppBCDF and its substrate-binding proteins DppA1-A5 in Pseudomonas aeruginosa.</title>
        <authorList>
            <person name="Pletzer D."/>
            <person name="Lafon C."/>
            <person name="Braun Y."/>
            <person name="Koehler T."/>
            <person name="Page M.G."/>
            <person name="Mourez M."/>
            <person name="Weingart H."/>
        </authorList>
    </citation>
    <scope>FUNCTION</scope>
    <scope>SUBUNIT</scope>
    <source>
        <strain>UCBPP-PA14</strain>
    </source>
</reference>
<sequence>MLHPLLRHLPLALALALCAAGAAQAKNLVVCTEASPEGFDIVQYTGAVTADASAETVFNRLLAFRPGTTEVIPGLAERWDVSADGLSYTFHLRPGVKFHTTDYFKPTRSLNADDVLWTFQRALDPKHPWHASALRGYAYFDAMGMGELIKSVEKVDELTVRFVLNRPEAPFLRDMAMPFASIYSAEYGDQLLAAGKQGQLNNQPIGTGPFVFKRYAKDAQVRYTANPDYYAGKPPIDNLVFAITLDPNVRMQKVRAGECQVSLYPKPEDVPRLKQDPNLAVDEIDALLTTYIAINTQHKPLDDPRVRQAINLALDKKAMLDAVFGPGAASPAVGPYPPTLLGYNHSIQDWPHDPERARALLKEAGAENLRITLFIRNGTSPTIPNPALAAQMLQADLAKAGIQLTIRSLEWGELLKRSKAGEHDLSLLGWAGDNGDPDNFLSPNLSCAAAESGENQARWCDKDFEALMRKAREVSDPAERAKLYEQAQVVFHEQAPWIPLAYPKLFNVRRNTVQGYVINPLSNNNFATTSVKP</sequence>
<protein>
    <recommendedName>
        <fullName evidence="4">Di/tripeptide-binding protein 4</fullName>
    </recommendedName>
</protein>